<keyword id="KW-0378">Hydrolase</keyword>
<keyword id="KW-1185">Reference proteome</keyword>
<name>BAMA_SYNAS</name>
<proteinExistence type="evidence at protein level"/>
<evidence type="ECO:0000269" key="1">
    <source>
    </source>
</evidence>
<evidence type="ECO:0000303" key="2">
    <source>
    </source>
</evidence>
<evidence type="ECO:0000305" key="3"/>
<evidence type="ECO:0000312" key="4">
    <source>
        <dbReference type="EMBL" id="ABC78905.1"/>
    </source>
</evidence>
<comment type="function">
    <text evidence="1">Involved in the central benzoyl-CoA catabolism. Catalyzes the addition of one molecule of water to the double bond and the hydrolytic cleavage of C-C bond in the alicyclic ring, 6-oxocyclohex-1-ene-1-carbonyl-CoA (6-OCH-CoA) to yield 3-hydroxypimelyl-CoA.</text>
</comment>
<comment type="catalytic activity">
    <reaction evidence="1">
        <text>6-oxocyclohex-1-ene-1-carbonyl-CoA + 2 H2O = 3-hydroxy-6-carboxyhexanoyl-CoA + H(+)</text>
        <dbReference type="Rhea" id="RHEA:39651"/>
        <dbReference type="ChEBI" id="CHEBI:15377"/>
        <dbReference type="ChEBI" id="CHEBI:15378"/>
        <dbReference type="ChEBI" id="CHEBI:57343"/>
        <dbReference type="ChEBI" id="CHEBI:76526"/>
        <dbReference type="EC" id="3.7.1.21"/>
    </reaction>
</comment>
<comment type="biophysicochemical properties">
    <kinetics>
        <KM evidence="1">115 uM for 6-OCH-CoA</KM>
    </kinetics>
</comment>
<comment type="pathway">
    <text evidence="3">Aromatic compound metabolism; benzoyl-CoA degradation.</text>
</comment>
<comment type="subunit">
    <text evidence="1">Homohexamer.</text>
</comment>
<comment type="similarity">
    <text evidence="3">Belongs to the enoyl-CoA hydratase/isomerase family.</text>
</comment>
<sequence>MSLDWMPREHGLKNHSRHTEQWWGTEAPCTVYEKRPLKDPKGNVVPGLYSAWIRLNNPGQYNSYTTEMVKGVIAGFENSSTDREVVAVVFTGTGPNAFCTGGNTKEYSEYYSMRPEEYGSYMELFNNMVDSILMCKKPVICRVNGMRVAGGQEIGTATDITVSSDLAIFGQAGPRHGSAPVGGASDFLPWFLSIEDAMWNCVSCEMWSAYKMKAKNLISKALPVLKDDKGNWVRNPQVYTDTYVKDGEIVYGEPKTGEEAKQARAWVNEKLKNNDYDFSLIDAEVDRIVWVFANLFPGCLMKSIDGIRQKKKFWWDQIKNDHRYWLGTNMMGEAFLGFGAFNTKKITGKDTIDFIKNRQLIAEGALVDEAFMEQVLGKPLAK</sequence>
<reference key="1">
    <citation type="journal article" date="2007" name="Proc. Natl. Acad. Sci. U.S.A.">
        <title>The genome of Syntrophus aciditrophicus: life at the thermodynamic limit of microbial growth.</title>
        <authorList>
            <person name="McInerney M.J."/>
            <person name="Rohlin L."/>
            <person name="Mouttaki H."/>
            <person name="Kim U."/>
            <person name="Krupp R.S."/>
            <person name="Rios-Hernandez L."/>
            <person name="Sieber J."/>
            <person name="Struchtemeyer C.G."/>
            <person name="Bhattacharyya A."/>
            <person name="Campbell J.W."/>
            <person name="Gunsalus R.P."/>
        </authorList>
    </citation>
    <scope>NUCLEOTIDE SEQUENCE [LARGE SCALE GENOMIC DNA]</scope>
    <source>
        <strain>SB</strain>
    </source>
</reference>
<reference key="2">
    <citation type="journal article" date="2008" name="Environ. Microbiol.">
        <title>6-Oxocyclohex-1-ene-1-carbonyl-coenzyme A hydrolases from obligately anaerobic bacteria: characterization and identification of its gene as a functional marker for aromatic compounds degrading anaerobes.</title>
        <authorList>
            <person name="Kuntze K."/>
            <person name="Shinoda Y."/>
            <person name="Moutakki H."/>
            <person name="McInerney M.J."/>
            <person name="Vogt C."/>
            <person name="Richnow H.H."/>
            <person name="Boll M."/>
        </authorList>
    </citation>
    <scope>FUNCTION</scope>
    <scope>CATALYTIC ACTIVITY</scope>
    <scope>BIOPHYSICOCHEMICAL PROPERTIES</scope>
    <scope>SUBUNIT</scope>
    <source>
        <strain>SB</strain>
    </source>
</reference>
<accession>Q2LXU2</accession>
<protein>
    <recommendedName>
        <fullName evidence="2">6-oxocyclohex-1-ene-1-carbonyl-CoA hydrolase</fullName>
        <shortName evidence="2">6-OCH-CoA hydrolase</shortName>
        <ecNumber evidence="1">3.7.1.21</ecNumber>
    </recommendedName>
    <alternativeName>
        <fullName evidence="3">6-oxocyclohex-1-ene-1-carbonyl-CoA hydratase</fullName>
    </alternativeName>
</protein>
<feature type="chain" id="PRO_0000430864" description="6-oxocyclohex-1-ene-1-carbonyl-CoA hydrolase">
    <location>
        <begin position="1"/>
        <end position="382"/>
    </location>
</feature>
<gene>
    <name evidence="2" type="primary">bamA</name>
    <name evidence="3" type="ordered locus">SYNAS_30260</name>
    <name evidence="4" type="ORF">SYN_01654</name>
</gene>
<dbReference type="EC" id="3.7.1.21" evidence="1"/>
<dbReference type="EMBL" id="CP000252">
    <property type="protein sequence ID" value="ABC78905.1"/>
    <property type="molecule type" value="Genomic_DNA"/>
</dbReference>
<dbReference type="RefSeq" id="WP_011418920.1">
    <property type="nucleotide sequence ID" value="NC_007759.1"/>
</dbReference>
<dbReference type="SMR" id="Q2LXU2"/>
<dbReference type="STRING" id="56780.SYN_01654"/>
<dbReference type="KEGG" id="sat:SYN_01654"/>
<dbReference type="eggNOG" id="COG1024">
    <property type="taxonomic scope" value="Bacteria"/>
</dbReference>
<dbReference type="HOGENOM" id="CLU_729117_0_0_7"/>
<dbReference type="InParanoid" id="Q2LXU2"/>
<dbReference type="OrthoDB" id="9774843at2"/>
<dbReference type="BioCyc" id="MetaCyc:MONOMER-18322"/>
<dbReference type="BRENDA" id="3.7.1.21">
    <property type="organism ID" value="14300"/>
</dbReference>
<dbReference type="UniPathway" id="UPA00739"/>
<dbReference type="Proteomes" id="UP000001933">
    <property type="component" value="Chromosome"/>
</dbReference>
<dbReference type="GO" id="GO:0018807">
    <property type="term" value="F:6-hydroxycyclohex-1-ene-1-carboxyl-CoA hydratase activity"/>
    <property type="evidence" value="ECO:0007669"/>
    <property type="project" value="UniProtKB-EC"/>
</dbReference>
<dbReference type="GO" id="GO:0016823">
    <property type="term" value="F:hydrolase activity, acting on acid carbon-carbon bonds, in ketonic substances"/>
    <property type="evidence" value="ECO:0000314"/>
    <property type="project" value="UniProtKB"/>
</dbReference>
<dbReference type="GO" id="GO:1901788">
    <property type="term" value="P:benzoyl-CoA catabolic process"/>
    <property type="evidence" value="ECO:0000314"/>
    <property type="project" value="UniProtKB"/>
</dbReference>
<dbReference type="CDD" id="cd06558">
    <property type="entry name" value="crotonase-like"/>
    <property type="match status" value="1"/>
</dbReference>
<dbReference type="FunFam" id="3.90.226.10:FF:000231">
    <property type="entry name" value="6-ketocyclohex-1-ene-1-carbonyl-CoA hydrolase"/>
    <property type="match status" value="1"/>
</dbReference>
<dbReference type="Gene3D" id="3.90.226.10">
    <property type="entry name" value="2-enoyl-CoA Hydratase, Chain A, domain 1"/>
    <property type="match status" value="1"/>
</dbReference>
<dbReference type="InterPro" id="IPR029045">
    <property type="entry name" value="ClpP/crotonase-like_dom_sf"/>
</dbReference>
<dbReference type="InterPro" id="IPR017613">
    <property type="entry name" value="Dearomat_hydrolase"/>
</dbReference>
<dbReference type="InterPro" id="IPR001753">
    <property type="entry name" value="Enoyl-CoA_hydra/iso"/>
</dbReference>
<dbReference type="NCBIfam" id="TIGR03200">
    <property type="entry name" value="dearomat_oah"/>
    <property type="match status" value="1"/>
</dbReference>
<dbReference type="PANTHER" id="PTHR43802">
    <property type="entry name" value="ENOYL-COA HYDRATASE"/>
    <property type="match status" value="1"/>
</dbReference>
<dbReference type="PANTHER" id="PTHR43802:SF1">
    <property type="entry name" value="IP11341P-RELATED"/>
    <property type="match status" value="1"/>
</dbReference>
<dbReference type="Pfam" id="PF00378">
    <property type="entry name" value="ECH_1"/>
    <property type="match status" value="1"/>
</dbReference>
<dbReference type="SUPFAM" id="SSF52096">
    <property type="entry name" value="ClpP/crotonase"/>
    <property type="match status" value="1"/>
</dbReference>
<dbReference type="PROSITE" id="PS50270">
    <property type="entry name" value="NGF_2"/>
    <property type="match status" value="1"/>
</dbReference>
<organism>
    <name type="scientific">Syntrophus aciditrophicus (strain SB)</name>
    <dbReference type="NCBI Taxonomy" id="56780"/>
    <lineage>
        <taxon>Bacteria</taxon>
        <taxon>Pseudomonadati</taxon>
        <taxon>Thermodesulfobacteriota</taxon>
        <taxon>Syntrophia</taxon>
        <taxon>Syntrophales</taxon>
        <taxon>Syntrophaceae</taxon>
        <taxon>Syntrophus</taxon>
    </lineage>
</organism>